<reference key="1">
    <citation type="journal article" date="2007" name="PLoS ONE">
        <title>Complete genomic characterization of a pathogenic A.II strain of Francisella tularensis subspecies tularensis.</title>
        <authorList>
            <person name="Beckstrom-Sternberg S.M."/>
            <person name="Auerbach R.K."/>
            <person name="Godbole S."/>
            <person name="Pearson J.V."/>
            <person name="Beckstrom-Sternberg J.S."/>
            <person name="Deng Z."/>
            <person name="Munk C."/>
            <person name="Kubota K."/>
            <person name="Zhou Y."/>
            <person name="Bruce D."/>
            <person name="Noronha J."/>
            <person name="Scheuermann R.H."/>
            <person name="Wang A."/>
            <person name="Wei X."/>
            <person name="Wang J."/>
            <person name="Hao J."/>
            <person name="Wagner D.M."/>
            <person name="Brettin T.S."/>
            <person name="Brown N."/>
            <person name="Gilna P."/>
            <person name="Keim P.S."/>
        </authorList>
    </citation>
    <scope>NUCLEOTIDE SEQUENCE [LARGE SCALE GENOMIC DNA]</scope>
    <source>
        <strain>WY96-3418</strain>
    </source>
</reference>
<proteinExistence type="inferred from homology"/>
<evidence type="ECO:0000255" key="1">
    <source>
        <dbReference type="HAMAP-Rule" id="MF_00388"/>
    </source>
</evidence>
<dbReference type="EC" id="3.5.1.108" evidence="1"/>
<dbReference type="EMBL" id="CP000608">
    <property type="protein sequence ID" value="ABO47551.1"/>
    <property type="molecule type" value="Genomic_DNA"/>
</dbReference>
<dbReference type="RefSeq" id="WP_003017478.1">
    <property type="nucleotide sequence ID" value="NC_009257.1"/>
</dbReference>
<dbReference type="SMR" id="A4J049"/>
<dbReference type="KEGG" id="ftw:FTW_1902"/>
<dbReference type="HOGENOM" id="CLU_046528_1_0_6"/>
<dbReference type="UniPathway" id="UPA00359">
    <property type="reaction ID" value="UER00478"/>
</dbReference>
<dbReference type="GO" id="GO:0016020">
    <property type="term" value="C:membrane"/>
    <property type="evidence" value="ECO:0007669"/>
    <property type="project" value="GOC"/>
</dbReference>
<dbReference type="GO" id="GO:0046872">
    <property type="term" value="F:metal ion binding"/>
    <property type="evidence" value="ECO:0007669"/>
    <property type="project" value="UniProtKB-KW"/>
</dbReference>
<dbReference type="GO" id="GO:0103117">
    <property type="term" value="F:UDP-3-O-acyl-N-acetylglucosamine deacetylase activity"/>
    <property type="evidence" value="ECO:0007669"/>
    <property type="project" value="UniProtKB-UniRule"/>
</dbReference>
<dbReference type="GO" id="GO:0009245">
    <property type="term" value="P:lipid A biosynthetic process"/>
    <property type="evidence" value="ECO:0007669"/>
    <property type="project" value="UniProtKB-UniRule"/>
</dbReference>
<dbReference type="Gene3D" id="3.30.230.20">
    <property type="entry name" value="lpxc deacetylase, domain 1"/>
    <property type="match status" value="1"/>
</dbReference>
<dbReference type="Gene3D" id="3.30.1700.10">
    <property type="entry name" value="lpxc deacetylase, domain 2"/>
    <property type="match status" value="1"/>
</dbReference>
<dbReference type="HAMAP" id="MF_00388">
    <property type="entry name" value="LpxC"/>
    <property type="match status" value="1"/>
</dbReference>
<dbReference type="InterPro" id="IPR020568">
    <property type="entry name" value="Ribosomal_Su5_D2-typ_SF"/>
</dbReference>
<dbReference type="InterPro" id="IPR004463">
    <property type="entry name" value="UDP-acyl_GlcNac_deAcase"/>
</dbReference>
<dbReference type="InterPro" id="IPR011334">
    <property type="entry name" value="UDP-acyl_GlcNac_deAcase_C"/>
</dbReference>
<dbReference type="InterPro" id="IPR015870">
    <property type="entry name" value="UDP-acyl_N-AcGlcN_deAcase_N"/>
</dbReference>
<dbReference type="NCBIfam" id="TIGR00325">
    <property type="entry name" value="lpxC"/>
    <property type="match status" value="1"/>
</dbReference>
<dbReference type="PANTHER" id="PTHR33694">
    <property type="entry name" value="UDP-3-O-ACYL-N-ACETYLGLUCOSAMINE DEACETYLASE 1, MITOCHONDRIAL-RELATED"/>
    <property type="match status" value="1"/>
</dbReference>
<dbReference type="PANTHER" id="PTHR33694:SF1">
    <property type="entry name" value="UDP-3-O-ACYL-N-ACETYLGLUCOSAMINE DEACETYLASE 1, MITOCHONDRIAL-RELATED"/>
    <property type="match status" value="1"/>
</dbReference>
<dbReference type="Pfam" id="PF03331">
    <property type="entry name" value="LpxC"/>
    <property type="match status" value="1"/>
</dbReference>
<dbReference type="SUPFAM" id="SSF54211">
    <property type="entry name" value="Ribosomal protein S5 domain 2-like"/>
    <property type="match status" value="2"/>
</dbReference>
<feature type="chain" id="PRO_1000122794" description="UDP-3-O-acyl-N-acetylglucosamine deacetylase">
    <location>
        <begin position="1"/>
        <end position="286"/>
    </location>
</feature>
<feature type="active site" description="Proton donor" evidence="1">
    <location>
        <position position="266"/>
    </location>
</feature>
<feature type="binding site" evidence="1">
    <location>
        <position position="81"/>
    </location>
    <ligand>
        <name>Zn(2+)</name>
        <dbReference type="ChEBI" id="CHEBI:29105"/>
    </ligand>
</feature>
<feature type="binding site" evidence="1">
    <location>
        <position position="240"/>
    </location>
    <ligand>
        <name>Zn(2+)</name>
        <dbReference type="ChEBI" id="CHEBI:29105"/>
    </ligand>
</feature>
<feature type="binding site" evidence="1">
    <location>
        <position position="244"/>
    </location>
    <ligand>
        <name>Zn(2+)</name>
        <dbReference type="ChEBI" id="CHEBI:29105"/>
    </ligand>
</feature>
<protein>
    <recommendedName>
        <fullName evidence="1">UDP-3-O-acyl-N-acetylglucosamine deacetylase</fullName>
        <shortName evidence="1">UDP-3-O-acyl-GlcNAc deacetylase</shortName>
        <ecNumber evidence="1">3.5.1.108</ecNumber>
    </recommendedName>
    <alternativeName>
        <fullName evidence="1">UDP-3-O-[R-3-hydroxymyristoyl]-N-acetylglucosamine deacetylase</fullName>
    </alternativeName>
</protein>
<gene>
    <name evidence="1" type="primary">lpxC</name>
    <name type="ordered locus">FTW_1902</name>
</gene>
<organism>
    <name type="scientific">Francisella tularensis subsp. tularensis (strain WY96-3418)</name>
    <dbReference type="NCBI Taxonomy" id="418136"/>
    <lineage>
        <taxon>Bacteria</taxon>
        <taxon>Pseudomonadati</taxon>
        <taxon>Pseudomonadota</taxon>
        <taxon>Gammaproteobacteria</taxon>
        <taxon>Thiotrichales</taxon>
        <taxon>Francisellaceae</taxon>
        <taxon>Francisella</taxon>
    </lineage>
</organism>
<keyword id="KW-0378">Hydrolase</keyword>
<keyword id="KW-0441">Lipid A biosynthesis</keyword>
<keyword id="KW-0444">Lipid biosynthesis</keyword>
<keyword id="KW-0443">Lipid metabolism</keyword>
<keyword id="KW-0479">Metal-binding</keyword>
<keyword id="KW-0862">Zinc</keyword>
<sequence length="286" mass="31991">MMKQKTIAKEFSVTGVGLHSGVDVSMTVKPADIDSGIVFRRADLTPVVDIKVTPSSIKEAIMCTLLTKDGDQNLSVSTIEHLMSAFAMFEVDNVLIEVNAPELPVMDGSSYEFTQLLKQVGIVEQNSARKGIKILKPVRVEHEDKFAEVLPSDTLKYEFKIHWDHPVIAATNDHIVFEYDLDEYIKMVSKARTFGFYEQLAYLHQNNLAKGASLDNAVGVTNEGVLNEGGLRYDDEFVRHKLLDAIGDFYVGGYILGHFNCFKSGHTLNNKLLHAVFADKDAWEYI</sequence>
<comment type="function">
    <text evidence="1">Catalyzes the hydrolysis of UDP-3-O-myristoyl-N-acetylglucosamine to form UDP-3-O-myristoylglucosamine and acetate, the committed step in lipid A biosynthesis.</text>
</comment>
<comment type="catalytic activity">
    <reaction evidence="1">
        <text>a UDP-3-O-[(3R)-3-hydroxyacyl]-N-acetyl-alpha-D-glucosamine + H2O = a UDP-3-O-[(3R)-3-hydroxyacyl]-alpha-D-glucosamine + acetate</text>
        <dbReference type="Rhea" id="RHEA:67816"/>
        <dbReference type="ChEBI" id="CHEBI:15377"/>
        <dbReference type="ChEBI" id="CHEBI:30089"/>
        <dbReference type="ChEBI" id="CHEBI:137740"/>
        <dbReference type="ChEBI" id="CHEBI:173225"/>
        <dbReference type="EC" id="3.5.1.108"/>
    </reaction>
</comment>
<comment type="cofactor">
    <cofactor evidence="1">
        <name>Zn(2+)</name>
        <dbReference type="ChEBI" id="CHEBI:29105"/>
    </cofactor>
</comment>
<comment type="pathway">
    <text evidence="1">Glycolipid biosynthesis; lipid IV(A) biosynthesis; lipid IV(A) from (3R)-3-hydroxytetradecanoyl-[acyl-carrier-protein] and UDP-N-acetyl-alpha-D-glucosamine: step 2/6.</text>
</comment>
<comment type="similarity">
    <text evidence="1">Belongs to the LpxC family.</text>
</comment>
<name>LPXC_FRATW</name>
<accession>A4J049</accession>